<comment type="function">
    <text evidence="1 5 6">Protein sialyltransferase specifically expressed in goblet cells that plays a key role in intestinal host-commensal homeostasis (By similarity). Conjugates sialic acid with an alpha-2-6 linkage to N-acetylgalactosamine (GalNAc) glycan chains linked to serine or threonine in glycoproteins (PubMed:8288607). Generates sialylated T and Tn antigens..</text>
</comment>
<comment type="catalytic activity">
    <reaction evidence="6">
        <text>a beta-D-galactosyl-(1-&gt;3)-N-acetyl-alpha-D-galactosaminyl derivative + CMP-N-acetyl-beta-neuraminate = a beta-D-galactosyl-(1-&gt;3)-[N-acetyl-alpha-neuraminyl-(2-&gt;6)]-N-acetyl-alpha-D-galactosaminyl derivative + CMP + H(+)</text>
        <dbReference type="Rhea" id="RHEA:11136"/>
        <dbReference type="ChEBI" id="CHEBI:15378"/>
        <dbReference type="ChEBI" id="CHEBI:57812"/>
        <dbReference type="ChEBI" id="CHEBI:60377"/>
        <dbReference type="ChEBI" id="CHEBI:133470"/>
        <dbReference type="ChEBI" id="CHEBI:140764"/>
        <dbReference type="EC" id="2.4.3.3"/>
    </reaction>
    <physiologicalReaction direction="left-to-right" evidence="6">
        <dbReference type="Rhea" id="RHEA:11137"/>
    </physiologicalReaction>
</comment>
<comment type="catalytic activity">
    <reaction evidence="1">
        <text>a 3-O-[N-acetyl-alpha-D-galactosaminyl]-L-seryl-[protein] + CMP-N-acetyl-beta-neuraminate = a 3-O-[N-acetyl-alpha-neuraminosyl-(2-&gt;6)-N-acetyl-alpha-D-galactosaminyl]-L-seryl-[protein] + CMP + H(+)</text>
        <dbReference type="Rhea" id="RHEA:81647"/>
        <dbReference type="Rhea" id="RHEA-COMP:12788"/>
        <dbReference type="Rhea" id="RHEA-COMP:19723"/>
        <dbReference type="ChEBI" id="CHEBI:15378"/>
        <dbReference type="ChEBI" id="CHEBI:53604"/>
        <dbReference type="ChEBI" id="CHEBI:57812"/>
        <dbReference type="ChEBI" id="CHEBI:60377"/>
        <dbReference type="ChEBI" id="CHEBI:231972"/>
    </reaction>
    <physiologicalReaction direction="left-to-right" evidence="1">
        <dbReference type="Rhea" id="RHEA:81648"/>
    </physiologicalReaction>
</comment>
<comment type="catalytic activity">
    <reaction evidence="5">
        <text>a 3-O-[N-acetyl-alpha-D-galactosaminyl]-L-threonyl-[protein] + CMP-N-acetyl-beta-neuraminate = a 3-O-[N-acetyl-alpha-neuraminosyl-(2-&gt;6)-N-acetyl-alpha-D-galactosaminyl]-L-threonyl-[protein] + CMP + H(+)</text>
        <dbReference type="Rhea" id="RHEA:81643"/>
        <dbReference type="Rhea" id="RHEA-COMP:11689"/>
        <dbReference type="Rhea" id="RHEA-COMP:19720"/>
        <dbReference type="ChEBI" id="CHEBI:15378"/>
        <dbReference type="ChEBI" id="CHEBI:57812"/>
        <dbReference type="ChEBI" id="CHEBI:60377"/>
        <dbReference type="ChEBI" id="CHEBI:87075"/>
        <dbReference type="ChEBI" id="CHEBI:231970"/>
    </reaction>
    <physiologicalReaction direction="left-to-right" evidence="8">
        <dbReference type="Rhea" id="RHEA:81644"/>
    </physiologicalReaction>
</comment>
<comment type="catalytic activity">
    <reaction evidence="1">
        <text>a 3-O-[beta-D-galactosyl-(1-&gt;3)-N-acetyl-alpha-D-galactosaminyl]-L-seryl-[protein] + CMP-N-acetyl-beta-neuraminate = a 3-O-{beta-D-galactosyl-(1-&gt;3)-[N-acetyl-alpha-neuraminosyl-(2-&gt;6)]-N-acetyl-alpha-D-galactosaminyl}-L-seryl-[protein] + CMP + H(+)</text>
        <dbReference type="Rhea" id="RHEA:81655"/>
        <dbReference type="Rhea" id="RHEA-COMP:13922"/>
        <dbReference type="Rhea" id="RHEA-COMP:19724"/>
        <dbReference type="ChEBI" id="CHEBI:15378"/>
        <dbReference type="ChEBI" id="CHEBI:57812"/>
        <dbReference type="ChEBI" id="CHEBI:60377"/>
        <dbReference type="ChEBI" id="CHEBI:137949"/>
        <dbReference type="ChEBI" id="CHEBI:231973"/>
    </reaction>
    <physiologicalReaction direction="left-to-right" evidence="1">
        <dbReference type="Rhea" id="RHEA:81656"/>
    </physiologicalReaction>
</comment>
<comment type="catalytic activity">
    <reaction evidence="5">
        <text>a 3-O-[beta-D-galactosyl-(1-&gt;3)-N-acetyl-alpha-D-galactosaminyl]-L-threonyl-[protein] + CMP-N-acetyl-beta-neuraminate = a 3-O-{beta-D-galactosyl-(1-&gt;3)-[N-acetyl-alpha-neuraminosyl-(2-&gt;6)]-N-acetyl-alpha-D-galactosaminyl}-L-threonyl-[protein] + CMP + H(+)</text>
        <dbReference type="Rhea" id="RHEA:81651"/>
        <dbReference type="Rhea" id="RHEA-COMP:13923"/>
        <dbReference type="Rhea" id="RHEA-COMP:19722"/>
        <dbReference type="ChEBI" id="CHEBI:15378"/>
        <dbReference type="ChEBI" id="CHEBI:57812"/>
        <dbReference type="ChEBI" id="CHEBI:60377"/>
        <dbReference type="ChEBI" id="CHEBI:137950"/>
        <dbReference type="ChEBI" id="CHEBI:231971"/>
    </reaction>
    <physiologicalReaction direction="left-to-right" evidence="8">
        <dbReference type="Rhea" id="RHEA:81652"/>
    </physiologicalReaction>
</comment>
<comment type="catalytic activity">
    <reaction evidence="5">
        <text>a 3-O-[N-acetyl-alpha-neuraminyl-(2-&gt;3)-beta-D-galactosyl-(1-&gt;3)-N-acetyl-alpha-D-galactosaminyl]-L-threonyl-[protein] + CMP-N-acetyl-beta-neuraminate = a 3-O-{alpha-Neu5Ac-(2-&gt;3)-beta-D-Gal-(1-&gt;3)-[alpha-Neu5Ac-(2-&gt;6)]-alpha-D-GalNAc}-L-threonyl-[protein] + CMP + H(+)</text>
        <dbReference type="Rhea" id="RHEA:81659"/>
        <dbReference type="Rhea" id="RHEA-COMP:14417"/>
        <dbReference type="Rhea" id="RHEA-COMP:16763"/>
        <dbReference type="ChEBI" id="CHEBI:15378"/>
        <dbReference type="ChEBI" id="CHEBI:57812"/>
        <dbReference type="ChEBI" id="CHEBI:60377"/>
        <dbReference type="ChEBI" id="CHEBI:139598"/>
        <dbReference type="ChEBI" id="CHEBI:156398"/>
    </reaction>
    <physiologicalReaction direction="left-to-right" evidence="8">
        <dbReference type="Rhea" id="RHEA:81660"/>
    </physiologicalReaction>
</comment>
<comment type="pathway">
    <text evidence="6">Protein modification; protein glycosylation.</text>
</comment>
<comment type="subcellular location">
    <subcellularLocation>
        <location evidence="1">Golgi apparatus membrane</location>
        <topology evidence="1">Single-pass type II membrane protein</topology>
    </subcellularLocation>
</comment>
<comment type="tissue specificity">
    <text evidence="6">Heart, kidney, testes, brain, liver and lung.</text>
</comment>
<comment type="developmental stage">
    <text evidence="6">Embryo.</text>
</comment>
<comment type="similarity">
    <text evidence="7">Belongs to the glycosyltransferase 29 family.</text>
</comment>
<organism>
    <name type="scientific">Gallus gallus</name>
    <name type="common">Chicken</name>
    <dbReference type="NCBI Taxonomy" id="9031"/>
    <lineage>
        <taxon>Eukaryota</taxon>
        <taxon>Metazoa</taxon>
        <taxon>Chordata</taxon>
        <taxon>Craniata</taxon>
        <taxon>Vertebrata</taxon>
        <taxon>Euteleostomi</taxon>
        <taxon>Archelosauria</taxon>
        <taxon>Archosauria</taxon>
        <taxon>Dinosauria</taxon>
        <taxon>Saurischia</taxon>
        <taxon>Theropoda</taxon>
        <taxon>Coelurosauria</taxon>
        <taxon>Aves</taxon>
        <taxon>Neognathae</taxon>
        <taxon>Galloanserae</taxon>
        <taxon>Galliformes</taxon>
        <taxon>Phasianidae</taxon>
        <taxon>Phasianinae</taxon>
        <taxon>Gallus</taxon>
    </lineage>
</organism>
<dbReference type="EC" id="2.4.3.3" evidence="6"/>
<dbReference type="EMBL" id="X74946">
    <property type="protein sequence ID" value="CAA52902.1"/>
    <property type="molecule type" value="mRNA"/>
</dbReference>
<dbReference type="PIR" id="A49880">
    <property type="entry name" value="A49880"/>
</dbReference>
<dbReference type="RefSeq" id="NP_990571.1">
    <property type="nucleotide sequence ID" value="NM_205240.1"/>
</dbReference>
<dbReference type="SMR" id="Q92183"/>
<dbReference type="FunCoup" id="Q92183">
    <property type="interactions" value="12"/>
</dbReference>
<dbReference type="STRING" id="9031.ENSGALP00000002878"/>
<dbReference type="CAZy" id="GT29">
    <property type="family name" value="Glycosyltransferase Family 29"/>
</dbReference>
<dbReference type="GlyCosmos" id="Q92183">
    <property type="glycosylation" value="8 sites, No reported glycans"/>
</dbReference>
<dbReference type="GlyGen" id="Q92183">
    <property type="glycosylation" value="8 sites"/>
</dbReference>
<dbReference type="PaxDb" id="9031-ENSGALP00000002878"/>
<dbReference type="GeneID" id="396168"/>
<dbReference type="KEGG" id="gga:396168"/>
<dbReference type="CTD" id="55808"/>
<dbReference type="VEuPathDB" id="HostDB:geneid_396168"/>
<dbReference type="eggNOG" id="KOG2692">
    <property type="taxonomic scope" value="Eukaryota"/>
</dbReference>
<dbReference type="HOGENOM" id="CLU_032020_4_1_1"/>
<dbReference type="InParanoid" id="Q92183"/>
<dbReference type="OrthoDB" id="10264956at2759"/>
<dbReference type="PhylomeDB" id="Q92183"/>
<dbReference type="TreeFam" id="TF354325"/>
<dbReference type="Reactome" id="R-GGA-4085001">
    <property type="pathway name" value="Sialic acid metabolism"/>
</dbReference>
<dbReference type="UniPathway" id="UPA00378"/>
<dbReference type="PRO" id="PR:Q92183"/>
<dbReference type="Proteomes" id="UP000000539">
    <property type="component" value="Chromosome 18"/>
</dbReference>
<dbReference type="Bgee" id="ENSGALG00000001862">
    <property type="expression patterns" value="Expressed in colon and 8 other cell types or tissues"/>
</dbReference>
<dbReference type="GO" id="GO:0000139">
    <property type="term" value="C:Golgi membrane"/>
    <property type="evidence" value="ECO:0000250"/>
    <property type="project" value="UniProtKB"/>
</dbReference>
<dbReference type="GO" id="GO:0001665">
    <property type="term" value="F:alpha-N-acetylgalactosaminide alpha-2,6-sialyltransferase activity"/>
    <property type="evidence" value="ECO:0000314"/>
    <property type="project" value="UniProtKB"/>
</dbReference>
<dbReference type="GO" id="GO:0048874">
    <property type="term" value="P:host-mediated regulation of intestinal microbiota composition"/>
    <property type="evidence" value="ECO:0000250"/>
    <property type="project" value="UniProtKB"/>
</dbReference>
<dbReference type="GO" id="GO:0009312">
    <property type="term" value="P:oligosaccharide biosynthetic process"/>
    <property type="evidence" value="ECO:0000318"/>
    <property type="project" value="GO_Central"/>
</dbReference>
<dbReference type="GO" id="GO:0006486">
    <property type="term" value="P:protein glycosylation"/>
    <property type="evidence" value="ECO:0000314"/>
    <property type="project" value="UniProtKB"/>
</dbReference>
<dbReference type="CDD" id="cd23973">
    <property type="entry name" value="GT29_ST6GALNAC1"/>
    <property type="match status" value="1"/>
</dbReference>
<dbReference type="FunFam" id="3.90.1480.20:FF:000013">
    <property type="entry name" value="ST6 N-acetylgalactosaminide alpha-2,6-sialyltransferase 1"/>
    <property type="match status" value="1"/>
</dbReference>
<dbReference type="Gene3D" id="3.90.1480.20">
    <property type="entry name" value="Glycosyl transferase family 29"/>
    <property type="match status" value="1"/>
</dbReference>
<dbReference type="InterPro" id="IPR001675">
    <property type="entry name" value="Glyco_trans_29"/>
</dbReference>
<dbReference type="InterPro" id="IPR038578">
    <property type="entry name" value="GT29-like_sf"/>
</dbReference>
<dbReference type="PANTHER" id="PTHR45941:SF1">
    <property type="entry name" value="ALPHA-N-ACETYLGALACTOSAMINIDE ALPHA-2,6-SIALYLTRANSFERASE 1"/>
    <property type="match status" value="1"/>
</dbReference>
<dbReference type="PANTHER" id="PTHR45941">
    <property type="entry name" value="ALPHA-N-ACETYLGALACTOSAMINIDE ALPHA-2,6-SIALYLTRANSFERASE 2-LIKE-RELATED"/>
    <property type="match status" value="1"/>
</dbReference>
<dbReference type="Pfam" id="PF00777">
    <property type="entry name" value="Glyco_transf_29"/>
    <property type="match status" value="1"/>
</dbReference>
<gene>
    <name type="primary">ST6GALNAC1</name>
    <name type="synonym">SIAT7A</name>
</gene>
<protein>
    <recommendedName>
        <fullName>Alpha-N-acetylgalactosaminide alpha-2,6-sialyltransferase 1</fullName>
        <ecNumber evidence="6">2.4.3.3</ecNumber>
    </recommendedName>
    <alternativeName>
        <fullName>GalNAc alpha-2,6-sialyltransferase I</fullName>
    </alternativeName>
    <alternativeName>
        <fullName>ST6GalNAc I</fullName>
        <shortName>ST6GalNAcI</shortName>
    </alternativeName>
    <alternativeName>
        <fullName>Sialyltransferase 7A</fullName>
        <shortName>SIAT7-A</shortName>
    </alternativeName>
</protein>
<name>SIA7A_CHICK</name>
<evidence type="ECO:0000250" key="1">
    <source>
        <dbReference type="UniProtKB" id="Q9NSC7"/>
    </source>
</evidence>
<evidence type="ECO:0000250" key="2">
    <source>
        <dbReference type="UniProtKB" id="Q9UJ37"/>
    </source>
</evidence>
<evidence type="ECO:0000255" key="3"/>
<evidence type="ECO:0000256" key="4">
    <source>
        <dbReference type="SAM" id="MobiDB-lite"/>
    </source>
</evidence>
<evidence type="ECO:0000269" key="5">
    <source>
    </source>
</evidence>
<evidence type="ECO:0000269" key="6">
    <source>
    </source>
</evidence>
<evidence type="ECO:0000305" key="7"/>
<evidence type="ECO:0000305" key="8">
    <source>
    </source>
</evidence>
<reference key="1">
    <citation type="journal article" date="1994" name="J. Biol. Chem.">
        <title>Molecular cloning and expression of GalNAc alpha 2,6-sialyltransferase.</title>
        <authorList>
            <person name="Kurosawa N."/>
            <person name="Hamamoto T."/>
            <person name="Lee Y.-C."/>
            <person name="Nakaoka T."/>
            <person name="Kojima N."/>
            <person name="Tsuji S."/>
        </authorList>
    </citation>
    <scope>NUCLEOTIDE SEQUENCE [MRNA]</scope>
    <scope>FUNCTION</scope>
    <scope>CATALYTIC ACTIVITY</scope>
    <scope>PATHWAY</scope>
    <scope>TISSUE SPECIFICITY</scope>
    <scope>DEVELOPMENTAL STAGE</scope>
    <source>
        <tissue>Embryo</tissue>
    </source>
</reference>
<reference key="2">
    <citation type="journal article" date="2002" name="J. Am. Chem. Soc.">
        <title>Efficient chemoenzymatic synthesis of O-linked sialyl oligosaccharides.</title>
        <authorList>
            <person name="Blixt O."/>
            <person name="Allin K."/>
            <person name="Pereira L."/>
            <person name="Datta A."/>
            <person name="Paulson J.C."/>
        </authorList>
    </citation>
    <scope>FUNCTION</scope>
    <scope>CATALYTIC ACTIVITY</scope>
</reference>
<proteinExistence type="evidence at protein level"/>
<accession>Q92183</accession>
<keyword id="KW-1015">Disulfide bond</keyword>
<keyword id="KW-0325">Glycoprotein</keyword>
<keyword id="KW-0328">Glycosyltransferase</keyword>
<keyword id="KW-0333">Golgi apparatus</keyword>
<keyword id="KW-0472">Membrane</keyword>
<keyword id="KW-1185">Reference proteome</keyword>
<keyword id="KW-0677">Repeat</keyword>
<keyword id="KW-0735">Signal-anchor</keyword>
<keyword id="KW-0808">Transferase</keyword>
<keyword id="KW-0812">Transmembrane</keyword>
<keyword id="KW-1133">Transmembrane helix</keyword>
<feature type="chain" id="PRO_0000149271" description="Alpha-N-acetylgalactosaminide alpha-2,6-sialyltransferase 1">
    <location>
        <begin position="1"/>
        <end position="566"/>
    </location>
</feature>
<feature type="topological domain" description="Cytoplasmic" evidence="3">
    <location>
        <begin position="1"/>
        <end position="16"/>
    </location>
</feature>
<feature type="transmembrane region" description="Helical; Signal-anchor for type II membrane protein" evidence="3">
    <location>
        <begin position="17"/>
        <end position="37"/>
    </location>
</feature>
<feature type="topological domain" description="Lumenal" evidence="3">
    <location>
        <begin position="38"/>
        <end position="566"/>
    </location>
</feature>
<feature type="repeat" description="1">
    <location>
        <begin position="247"/>
        <end position="254"/>
    </location>
</feature>
<feature type="repeat" description="2">
    <location>
        <begin position="330"/>
        <end position="337"/>
    </location>
</feature>
<feature type="region of interest" description="Disordered" evidence="4">
    <location>
        <begin position="138"/>
        <end position="161"/>
    </location>
</feature>
<feature type="region of interest" description="2 X 8 AA repeats of S-S-S-X-V-S-T-C">
    <location>
        <begin position="247"/>
        <end position="337"/>
    </location>
</feature>
<feature type="glycosylation site" description="N-linked (GlcNAc...) asparagine" evidence="3">
    <location>
        <position position="66"/>
    </location>
</feature>
<feature type="glycosylation site" description="N-linked (GlcNAc...) asparagine" evidence="3">
    <location>
        <position position="132"/>
    </location>
</feature>
<feature type="glycosylation site" description="N-linked (GlcNAc...) asparagine" evidence="3">
    <location>
        <position position="192"/>
    </location>
</feature>
<feature type="glycosylation site" description="N-linked (GlcNAc...) asparagine" evidence="3">
    <location>
        <position position="275"/>
    </location>
</feature>
<feature type="glycosylation site" description="N-linked (GlcNAc...) asparagine" evidence="3">
    <location>
        <position position="286"/>
    </location>
</feature>
<feature type="glycosylation site" description="N-linked (GlcNAc...) asparagine" evidence="3">
    <location>
        <position position="306"/>
    </location>
</feature>
<feature type="glycosylation site" description="N-linked (GlcNAc...) asparagine" evidence="3">
    <location>
        <position position="329"/>
    </location>
</feature>
<feature type="glycosylation site" description="N-linked (GlcNAc...) asparagine" evidence="3">
    <location>
        <position position="333"/>
    </location>
</feature>
<feature type="disulfide bond" evidence="2">
    <location>
        <begin position="254"/>
        <end position="337"/>
    </location>
</feature>
<feature type="disulfide bond" evidence="2">
    <location>
        <begin position="340"/>
        <end position="508"/>
    </location>
</feature>
<sequence>MGFLIRRLPKDSRIFRWLLILTVFSFIITSFSALFGMEKSIFRQLKIYQSIAHMLQVDTQDQQGSNYSANGRISKVGLERDIAWLELNTAVSTPSGEGKEEQKKTVKPVAKVEEAKEKVTVKPFPEVMGITNTTASTASVVERTKEKTTARPVPGVGEADGKRTTIALPSMKEDKEKATVKPSFGMKVAHANSTSKDKPKAEEPPASVKAIRPVTQAATVTEKKKLRAADFKTEPQWDFDDEYILDSSSPVSTCSESVRAKAAKSDWLRDLFLPNITLFIDKSYFNVSEWDRLEHFAPPYGFMELNYSLVEEVMSRLPPNPHQQLLLANSSSNVSTCISCAVVGNGGILNNSGMGQEIDSHDYVFRVSGAVIKGYEKDVGTKTSFYGFTAYSLVSSLQNLGHKGFKKIPQGKHIRYIHFLEAVRDYEWLKALLLDKDIRKGFLNYYGRRPRERFDEDFTMNKYLVAHPDFLRYLKNRFLKSKNLQKPYWRLYRPTTGALLLLTALHLCDRVSAYGYITEGHQKYSDHYYDKEWKRLVFYVNHDFNLEKQVWKRLHDENIMKLYQRS</sequence>